<protein>
    <recommendedName>
        <fullName>Matrix metalloproteinase-17</fullName>
        <shortName>MMP-17</shortName>
        <ecNumber>3.4.24.-</ecNumber>
    </recommendedName>
    <alternativeName>
        <fullName>Membrane-type matrix metalloproteinase 4</fullName>
        <shortName>MT-MMP 4</shortName>
        <shortName>MTMMP4</shortName>
    </alternativeName>
    <alternativeName>
        <fullName>Membrane-type-4 matrix metalloproteinase</fullName>
        <shortName>MT4-MMP</shortName>
        <shortName>MT4MMP</shortName>
    </alternativeName>
</protein>
<accession>Q9ULZ9</accession>
<accession>Q14850</accession>
<name>MMP17_HUMAN</name>
<reference key="1">
    <citation type="journal article" date="1999" name="FEBS Lett.">
        <title>Human membrane type-4 matrix metalloproteinase (MT4-MMP) is encoded by a novel major transcript: isolation of complementary DNA clones for human and mouse mt4-mmp transcripts.</title>
        <authorList>
            <person name="Kajita M."/>
            <person name="Kinoh H."/>
            <person name="Ito N."/>
            <person name="Takamura A."/>
            <person name="Itoh Y."/>
            <person name="Okada A."/>
            <person name="Sato H."/>
            <person name="Seiki M."/>
        </authorList>
    </citation>
    <scope>NUCLEOTIDE SEQUENCE [MRNA] (ISOFORM LONG)</scope>
    <source>
        <tissue>Monocytic leukemia</tissue>
    </source>
</reference>
<reference key="2">
    <citation type="submission" date="2002-01" db="EMBL/GenBank/DDBJ databases">
        <authorList>
            <person name="Seiki M."/>
        </authorList>
    </citation>
    <scope>SEQUENCE REVISION TO 41; 44; 202-207; 221 AND 225</scope>
</reference>
<reference key="3">
    <citation type="journal article" date="1996" name="Cancer Res.">
        <title>Molecular cloning of a novel membrane-type matrix metalloproteinase from a human breast carcinoma.</title>
        <authorList>
            <person name="Puente X.S."/>
            <person name="Pendas A.M."/>
            <person name="Llano E."/>
            <person name="Velasco G."/>
            <person name="Lopez-Otin C."/>
        </authorList>
    </citation>
    <scope>NUCLEOTIDE SEQUENCE [MRNA] (ISOFORM SHORT)</scope>
    <source>
        <tissue>Mammary carcinoma</tissue>
    </source>
</reference>
<reference key="4">
    <citation type="journal article" date="2006" name="Nature">
        <title>The finished DNA sequence of human chromosome 12.</title>
        <authorList>
            <person name="Scherer S.E."/>
            <person name="Muzny D.M."/>
            <person name="Buhay C.J."/>
            <person name="Chen R."/>
            <person name="Cree A."/>
            <person name="Ding Y."/>
            <person name="Dugan-Rocha S."/>
            <person name="Gill R."/>
            <person name="Gunaratne P."/>
            <person name="Harris R.A."/>
            <person name="Hawes A.C."/>
            <person name="Hernandez J."/>
            <person name="Hodgson A.V."/>
            <person name="Hume J."/>
            <person name="Jackson A."/>
            <person name="Khan Z.M."/>
            <person name="Kovar-Smith C."/>
            <person name="Lewis L.R."/>
            <person name="Lozado R.J."/>
            <person name="Metzker M.L."/>
            <person name="Milosavljevic A."/>
            <person name="Miner G.R."/>
            <person name="Montgomery K.T."/>
            <person name="Morgan M.B."/>
            <person name="Nazareth L.V."/>
            <person name="Scott G."/>
            <person name="Sodergren E."/>
            <person name="Song X.-Z."/>
            <person name="Steffen D."/>
            <person name="Lovering R.C."/>
            <person name="Wheeler D.A."/>
            <person name="Worley K.C."/>
            <person name="Yuan Y."/>
            <person name="Zhang Z."/>
            <person name="Adams C.Q."/>
            <person name="Ansari-Lari M.A."/>
            <person name="Ayele M."/>
            <person name="Brown M.J."/>
            <person name="Chen G."/>
            <person name="Chen Z."/>
            <person name="Clerc-Blankenburg K.P."/>
            <person name="Davis C."/>
            <person name="Delgado O."/>
            <person name="Dinh H.H."/>
            <person name="Draper H."/>
            <person name="Gonzalez-Garay M.L."/>
            <person name="Havlak P."/>
            <person name="Jackson L.R."/>
            <person name="Jacob L.S."/>
            <person name="Kelly S.H."/>
            <person name="Li L."/>
            <person name="Li Z."/>
            <person name="Liu J."/>
            <person name="Liu W."/>
            <person name="Lu J."/>
            <person name="Maheshwari M."/>
            <person name="Nguyen B.-V."/>
            <person name="Okwuonu G.O."/>
            <person name="Pasternak S."/>
            <person name="Perez L.M."/>
            <person name="Plopper F.J.H."/>
            <person name="Santibanez J."/>
            <person name="Shen H."/>
            <person name="Tabor P.E."/>
            <person name="Verduzco D."/>
            <person name="Waldron L."/>
            <person name="Wang Q."/>
            <person name="Williams G.A."/>
            <person name="Zhang J."/>
            <person name="Zhou J."/>
            <person name="Allen C.C."/>
            <person name="Amin A.G."/>
            <person name="Anyalebechi V."/>
            <person name="Bailey M."/>
            <person name="Barbaria J.A."/>
            <person name="Bimage K.E."/>
            <person name="Bryant N.P."/>
            <person name="Burch P.E."/>
            <person name="Burkett C.E."/>
            <person name="Burrell K.L."/>
            <person name="Calderon E."/>
            <person name="Cardenas V."/>
            <person name="Carter K."/>
            <person name="Casias K."/>
            <person name="Cavazos I."/>
            <person name="Cavazos S.R."/>
            <person name="Ceasar H."/>
            <person name="Chacko J."/>
            <person name="Chan S.N."/>
            <person name="Chavez D."/>
            <person name="Christopoulos C."/>
            <person name="Chu J."/>
            <person name="Cockrell R."/>
            <person name="Cox C.D."/>
            <person name="Dang M."/>
            <person name="Dathorne S.R."/>
            <person name="David R."/>
            <person name="Davis C.M."/>
            <person name="Davy-Carroll L."/>
            <person name="Deshazo D.R."/>
            <person name="Donlin J.E."/>
            <person name="D'Souza L."/>
            <person name="Eaves K.A."/>
            <person name="Egan A."/>
            <person name="Emery-Cohen A.J."/>
            <person name="Escotto M."/>
            <person name="Flagg N."/>
            <person name="Forbes L.D."/>
            <person name="Gabisi A.M."/>
            <person name="Garza M."/>
            <person name="Hamilton C."/>
            <person name="Henderson N."/>
            <person name="Hernandez O."/>
            <person name="Hines S."/>
            <person name="Hogues M.E."/>
            <person name="Huang M."/>
            <person name="Idlebird D.G."/>
            <person name="Johnson R."/>
            <person name="Jolivet A."/>
            <person name="Jones S."/>
            <person name="Kagan R."/>
            <person name="King L.M."/>
            <person name="Leal B."/>
            <person name="Lebow H."/>
            <person name="Lee S."/>
            <person name="LeVan J.M."/>
            <person name="Lewis L.C."/>
            <person name="London P."/>
            <person name="Lorensuhewa L.M."/>
            <person name="Loulseged H."/>
            <person name="Lovett D.A."/>
            <person name="Lucier A."/>
            <person name="Lucier R.L."/>
            <person name="Ma J."/>
            <person name="Madu R.C."/>
            <person name="Mapua P."/>
            <person name="Martindale A.D."/>
            <person name="Martinez E."/>
            <person name="Massey E."/>
            <person name="Mawhiney S."/>
            <person name="Meador M.G."/>
            <person name="Mendez S."/>
            <person name="Mercado C."/>
            <person name="Mercado I.C."/>
            <person name="Merritt C.E."/>
            <person name="Miner Z.L."/>
            <person name="Minja E."/>
            <person name="Mitchell T."/>
            <person name="Mohabbat F."/>
            <person name="Mohabbat K."/>
            <person name="Montgomery B."/>
            <person name="Moore N."/>
            <person name="Morris S."/>
            <person name="Munidasa M."/>
            <person name="Ngo R.N."/>
            <person name="Nguyen N.B."/>
            <person name="Nickerson E."/>
            <person name="Nwaokelemeh O.O."/>
            <person name="Nwokenkwo S."/>
            <person name="Obregon M."/>
            <person name="Oguh M."/>
            <person name="Oragunye N."/>
            <person name="Oviedo R.J."/>
            <person name="Parish B.J."/>
            <person name="Parker D.N."/>
            <person name="Parrish J."/>
            <person name="Parks K.L."/>
            <person name="Paul H.A."/>
            <person name="Payton B.A."/>
            <person name="Perez A."/>
            <person name="Perrin W."/>
            <person name="Pickens A."/>
            <person name="Primus E.L."/>
            <person name="Pu L.-L."/>
            <person name="Puazo M."/>
            <person name="Quiles M.M."/>
            <person name="Quiroz J.B."/>
            <person name="Rabata D."/>
            <person name="Reeves K."/>
            <person name="Ruiz S.J."/>
            <person name="Shao H."/>
            <person name="Sisson I."/>
            <person name="Sonaike T."/>
            <person name="Sorelle R.P."/>
            <person name="Sutton A.E."/>
            <person name="Svatek A.F."/>
            <person name="Svetz L.A."/>
            <person name="Tamerisa K.S."/>
            <person name="Taylor T.R."/>
            <person name="Teague B."/>
            <person name="Thomas N."/>
            <person name="Thorn R.D."/>
            <person name="Trejos Z.Y."/>
            <person name="Trevino B.K."/>
            <person name="Ukegbu O.N."/>
            <person name="Urban J.B."/>
            <person name="Vasquez L.I."/>
            <person name="Vera V.A."/>
            <person name="Villasana D.M."/>
            <person name="Wang L."/>
            <person name="Ward-Moore S."/>
            <person name="Warren J.T."/>
            <person name="Wei X."/>
            <person name="White F."/>
            <person name="Williamson A.L."/>
            <person name="Wleczyk R."/>
            <person name="Wooden H.S."/>
            <person name="Wooden S.H."/>
            <person name="Yen J."/>
            <person name="Yoon L."/>
            <person name="Yoon V."/>
            <person name="Zorrilla S.E."/>
            <person name="Nelson D."/>
            <person name="Kucherlapati R."/>
            <person name="Weinstock G."/>
            <person name="Gibbs R.A."/>
        </authorList>
    </citation>
    <scope>NUCLEOTIDE SEQUENCE [LARGE SCALE GENOMIC DNA]</scope>
</reference>
<reference key="5">
    <citation type="journal article" date="1999" name="J. Biol. Chem.">
        <title>Catalytic activities and substrate specificity of the human membrane type 4 matrix metalloproteinase catalytic domain.</title>
        <authorList>
            <person name="Wang Y."/>
            <person name="Johnson A.R."/>
            <person name="Ye Q.-Z."/>
            <person name="Dyer R.D."/>
        </authorList>
    </citation>
    <scope>NUCLEOTIDE SEQUENCE [MRNA] OF 126-299</scope>
    <scope>CHARACTERIZATION</scope>
</reference>
<reference key="6">
    <citation type="journal article" date="1999" name="J. Biol. Chem.">
        <title>Membrane type 4 matrix metalloproteinase (MT4-MMP, MMP-17) is a glycosylphosphatidylinositol-anchored proteinase.</title>
        <authorList>
            <person name="Itoh Y."/>
            <person name="Kajita M."/>
            <person name="Kinoh H."/>
            <person name="Mori H."/>
            <person name="Okada A."/>
            <person name="Seiki M."/>
        </authorList>
    </citation>
    <scope>GPI-ANCHOR</scope>
</reference>
<reference key="7">
    <citation type="journal article" date="1999" name="Biol. Chem.">
        <title>Biochemical characterization of the catalytic domain of membrane-type 4 matrix metalloproteinase.</title>
        <authorList>
            <person name="Kolkenbrock H."/>
            <person name="Essers L."/>
            <person name="Ulbrich N."/>
            <person name="Will H."/>
        </authorList>
    </citation>
    <scope>CHARACTERIZATION</scope>
</reference>
<comment type="function">
    <text>Endopeptidase that degrades various components of the extracellular matrix, such as fibrin. May be involved in the activation of membrane-bound precursors of growth factors or inflammatory mediators, such as tumor necrosis factor-alpha. May also be involved in tumoral process. Cleaves pro-TNF-alpha at the '74-Ala-|-Gln-75' site. Not obvious if able to proteolytically activate progelatinase A. Does not hydrolyze collagen types I, II, III, IV and V, gelatin, fibronectin, laminin, decorin nor alpha1-antitrypsin.</text>
</comment>
<comment type="cofactor">
    <cofactor evidence="1">
        <name>Zn(2+)</name>
        <dbReference type="ChEBI" id="CHEBI:29105"/>
    </cofactor>
    <text evidence="1">Binds 1 zinc ion per subunit.</text>
</comment>
<comment type="cofactor">
    <cofactor evidence="1">
        <name>Ca(2+)</name>
        <dbReference type="ChEBI" id="CHEBI:29108"/>
    </cofactor>
</comment>
<comment type="subcellular location">
    <molecule>Isoform Long</molecule>
    <subcellularLocation>
        <location>Cell membrane</location>
        <topology>Lipid-anchor</topology>
        <topology>GPI-anchor</topology>
        <orientation>Extracellular side</orientation>
    </subcellularLocation>
    <subcellularLocation>
        <location>Secreted</location>
        <location>Extracellular space</location>
        <location>Extracellular matrix</location>
    </subcellularLocation>
</comment>
<comment type="alternative products">
    <event type="alternative splicing"/>
    <isoform>
        <id>Q9ULZ9-1</id>
        <name>Long</name>
        <sequence type="displayed"/>
    </isoform>
    <isoform>
        <id>Q9ULZ9-2</id>
        <name>Short</name>
        <name>Puente</name>
        <sequence type="described" ref="VSP_005456"/>
    </isoform>
</comment>
<comment type="tissue specificity">
    <text>Expressed in brain, leukocytes, colon, ovary testis and breast cancer. Expressed also in many transformed and non-transformed cell types.</text>
</comment>
<comment type="domain">
    <text>The conserved cysteine present in the cysteine-switch motif binds the catalytic zinc ion, thus inhibiting the enzyme. The dissociation of the cysteine from the zinc ion upon the activation-peptide release activates the enzyme.</text>
</comment>
<comment type="PTM">
    <text evidence="1">The precursor is cleaved by a furin endopeptidase.</text>
</comment>
<comment type="similarity">
    <text evidence="6">Belongs to the peptidase M10A family.</text>
</comment>
<organism>
    <name type="scientific">Homo sapiens</name>
    <name type="common">Human</name>
    <dbReference type="NCBI Taxonomy" id="9606"/>
    <lineage>
        <taxon>Eukaryota</taxon>
        <taxon>Metazoa</taxon>
        <taxon>Chordata</taxon>
        <taxon>Craniata</taxon>
        <taxon>Vertebrata</taxon>
        <taxon>Euteleostomi</taxon>
        <taxon>Mammalia</taxon>
        <taxon>Eutheria</taxon>
        <taxon>Euarchontoglires</taxon>
        <taxon>Primates</taxon>
        <taxon>Haplorrhini</taxon>
        <taxon>Catarrhini</taxon>
        <taxon>Hominidae</taxon>
        <taxon>Homo</taxon>
    </lineage>
</organism>
<feature type="signal peptide" evidence="2">
    <location>
        <begin position="1"/>
        <end position="35"/>
    </location>
</feature>
<feature type="propeptide" id="PRO_0000028818" evidence="1">
    <location>
        <begin position="36"/>
        <end position="125"/>
    </location>
</feature>
<feature type="chain" id="PRO_0000028819" description="Matrix metalloproteinase-17">
    <location>
        <begin position="126"/>
        <end position="565"/>
    </location>
</feature>
<feature type="propeptide" id="PRO_0000028820" description="Removed in mature form" evidence="2">
    <location>
        <begin position="566"/>
        <end position="603"/>
    </location>
</feature>
<feature type="repeat" description="Hemopexin 1">
    <location>
        <begin position="333"/>
        <end position="378"/>
    </location>
</feature>
<feature type="repeat" description="Hemopexin 2">
    <location>
        <begin position="382"/>
        <end position="427"/>
    </location>
</feature>
<feature type="repeat" description="Hemopexin 3">
    <location>
        <begin position="428"/>
        <end position="475"/>
    </location>
</feature>
<feature type="repeat" description="Hemopexin 4">
    <location>
        <begin position="476"/>
        <end position="523"/>
    </location>
</feature>
<feature type="region of interest" description="Disordered" evidence="4">
    <location>
        <begin position="301"/>
        <end position="329"/>
    </location>
</feature>
<feature type="region of interest" description="Disordered" evidence="4">
    <location>
        <begin position="537"/>
        <end position="571"/>
    </location>
</feature>
<feature type="short sequence motif" description="Cysteine switch" evidence="1">
    <location>
        <begin position="108"/>
        <end position="115"/>
    </location>
</feature>
<feature type="active site" evidence="3">
    <location>
        <position position="249"/>
    </location>
</feature>
<feature type="binding site" description="in inhibited form" evidence="1">
    <location>
        <position position="110"/>
    </location>
    <ligand>
        <name>Zn(2+)</name>
        <dbReference type="ChEBI" id="CHEBI:29105"/>
        <note>catalytic</note>
    </ligand>
</feature>
<feature type="binding site" evidence="3">
    <location>
        <position position="248"/>
    </location>
    <ligand>
        <name>Zn(2+)</name>
        <dbReference type="ChEBI" id="CHEBI:29105"/>
        <note>catalytic</note>
    </ligand>
</feature>
<feature type="binding site" evidence="3">
    <location>
        <position position="252"/>
    </location>
    <ligand>
        <name>Zn(2+)</name>
        <dbReference type="ChEBI" id="CHEBI:29105"/>
        <note>catalytic</note>
    </ligand>
</feature>
<feature type="binding site" evidence="3">
    <location>
        <position position="258"/>
    </location>
    <ligand>
        <name>Zn(2+)</name>
        <dbReference type="ChEBI" id="CHEBI:29105"/>
        <note>catalytic</note>
    </ligand>
</feature>
<feature type="lipid moiety-binding region" description="GPI-anchor amidated serine" evidence="2">
    <location>
        <position position="565"/>
    </location>
</feature>
<feature type="glycosylation site" description="N-linked (GlcNAc...) asparagine" evidence="2">
    <location>
        <position position="137"/>
    </location>
</feature>
<feature type="glycosylation site" description="N-linked (GlcNAc...) asparagine" evidence="2">
    <location>
        <position position="318"/>
    </location>
</feature>
<feature type="disulfide bond" evidence="1">
    <location>
        <begin position="332"/>
        <end position="523"/>
    </location>
</feature>
<feature type="splice variant" id="VSP_005456" description="In isoform Short." evidence="5">
    <location>
        <begin position="1"/>
        <end position="84"/>
    </location>
</feature>
<feature type="sequence conflict" description="In Ref. 1; BAA82707 and 2; CAA61753." evidence="6" ref="1 2">
    <original>L</original>
    <variation>LLPL</variation>
    <location>
        <position position="23"/>
    </location>
</feature>
<feature type="sequence conflict" description="In Ref. 1; BAA82707 and 2; CAA61753." evidence="6" ref="1 2">
    <original>A</original>
    <variation>T</variation>
    <location>
        <position position="182"/>
    </location>
</feature>
<sequence length="603" mass="66653">MRRRAARGPGPPPPGPGLSRLPLPLLLLLALGTRGGCAAPAPAPRAEDLSLGVEWLSRFGYLPPADPTTGQLQTQEELSKAITAMQQFGGLEATGILDEATLALMKTPRCSLPDLPVLTQARRRRQAPAPTKWNKRNLSWRVRTFPRDSPLGHDTVRALMYYALKVWSDIAPLNFHEVAGSAADIQIDFSKADHNDGYPFDGPGGTVAHAFFPGHHHTAGDTHFDDDEAWTFRSSDAHGMDLFAVAVHEFGHAIGLSHVAAAHSIMRPYYQGPVGDPLRYGLPYEDKVRVWQLYGVRESVSPTAQPEEPPLLPEPPDNRSSAPPRKDVPHRCSTHFDAVAQIRGEAFFFKGKYFWRLTRDRHLVSLQPAQMHRFWRGLPLHLDSVDAVYERTSDHKIVFFKGDRYWVFKDNNVEEGYPRPVSDFSLPPGGIDAAFSWAHNDRTYFFKDQLYWRYDDHTRHMDPGYPAQSPLWRGVPSTLDDAMRWSDGASYFFRGQEYWKVLDGELEVAPGYPQSTARDWLVCGDSQADGSVAAGVDAAEGPRAPPGQHDQSRSEDGYEVCSCTSGASSPPGAPGPLVAATMLLLLPPLSPGALWTAAQALTL</sequence>
<proteinExistence type="evidence at protein level"/>
<dbReference type="EC" id="3.4.24.-"/>
<dbReference type="EMBL" id="AB021225">
    <property type="protein sequence ID" value="BAA82707.2"/>
    <property type="molecule type" value="mRNA"/>
</dbReference>
<dbReference type="EMBL" id="X89576">
    <property type="protein sequence ID" value="CAA61753.1"/>
    <property type="molecule type" value="mRNA"/>
</dbReference>
<dbReference type="EMBL" id="AC131009">
    <property type="status" value="NOT_ANNOTATED_CDS"/>
    <property type="molecule type" value="Genomic_DNA"/>
</dbReference>
<dbReference type="CCDS" id="CCDS31927.1">
    <molecule id="Q9ULZ9-1"/>
</dbReference>
<dbReference type="CCDS" id="CCDS91781.1">
    <molecule id="Q9ULZ9-2"/>
</dbReference>
<dbReference type="RefSeq" id="NP_001397929.1">
    <molecule id="Q9ULZ9-2"/>
    <property type="nucleotide sequence ID" value="NM_001411000.1"/>
</dbReference>
<dbReference type="RefSeq" id="NP_057239.4">
    <molecule id="Q9ULZ9-1"/>
    <property type="nucleotide sequence ID" value="NM_016155.5"/>
</dbReference>
<dbReference type="RefSeq" id="XP_011536657.1">
    <molecule id="Q9ULZ9-2"/>
    <property type="nucleotide sequence ID" value="XM_011538355.4"/>
</dbReference>
<dbReference type="RefSeq" id="XP_011536658.1">
    <molecule id="Q9ULZ9-2"/>
    <property type="nucleotide sequence ID" value="XM_011538356.4"/>
</dbReference>
<dbReference type="RefSeq" id="XP_011536659.1">
    <property type="nucleotide sequence ID" value="XM_011538357.2"/>
</dbReference>
<dbReference type="SMR" id="Q9ULZ9"/>
<dbReference type="BioGRID" id="110469">
    <property type="interactions" value="6"/>
</dbReference>
<dbReference type="FunCoup" id="Q9ULZ9">
    <property type="interactions" value="46"/>
</dbReference>
<dbReference type="STRING" id="9606.ENSP00000353767"/>
<dbReference type="BindingDB" id="Q9ULZ9"/>
<dbReference type="ChEMBL" id="CHEMBL2937"/>
<dbReference type="DrugBank" id="DB00786">
    <property type="generic name" value="Marimastat"/>
</dbReference>
<dbReference type="GuidetoPHARMACOLOGY" id="1641"/>
<dbReference type="MEROPS" id="M10.017"/>
<dbReference type="GlyCosmos" id="Q9ULZ9">
    <property type="glycosylation" value="2 sites, No reported glycans"/>
</dbReference>
<dbReference type="GlyGen" id="Q9ULZ9">
    <property type="glycosylation" value="2 sites"/>
</dbReference>
<dbReference type="iPTMnet" id="Q9ULZ9"/>
<dbReference type="PhosphoSitePlus" id="Q9ULZ9"/>
<dbReference type="BioMuta" id="MMP17"/>
<dbReference type="DMDM" id="296439485"/>
<dbReference type="MassIVE" id="Q9ULZ9"/>
<dbReference type="PaxDb" id="9606-ENSP00000353767"/>
<dbReference type="PeptideAtlas" id="Q9ULZ9"/>
<dbReference type="ProteomicsDB" id="85161">
    <molecule id="Q9ULZ9-1"/>
</dbReference>
<dbReference type="ProteomicsDB" id="85162">
    <molecule id="Q9ULZ9-2"/>
</dbReference>
<dbReference type="Antibodypedia" id="31995">
    <property type="antibodies" value="314 antibodies from 31 providers"/>
</dbReference>
<dbReference type="DNASU" id="4326"/>
<dbReference type="Ensembl" id="ENST00000360564.5">
    <molecule id="Q9ULZ9-1"/>
    <property type="protein sequence ID" value="ENSP00000353767.1"/>
    <property type="gene ID" value="ENSG00000198598.7"/>
</dbReference>
<dbReference type="Ensembl" id="ENST00000535291.5">
    <molecule id="Q9ULZ9-2"/>
    <property type="protein sequence ID" value="ENSP00000441106.1"/>
    <property type="gene ID" value="ENSG00000198598.7"/>
</dbReference>
<dbReference type="GeneID" id="4326"/>
<dbReference type="KEGG" id="hsa:4326"/>
<dbReference type="MANE-Select" id="ENST00000360564.5">
    <property type="protein sequence ID" value="ENSP00000353767.1"/>
    <property type="RefSeq nucleotide sequence ID" value="NM_016155.7"/>
    <property type="RefSeq protein sequence ID" value="NP_057239.4"/>
</dbReference>
<dbReference type="UCSC" id="uc001ujc.2">
    <molecule id="Q9ULZ9-1"/>
    <property type="organism name" value="human"/>
</dbReference>
<dbReference type="AGR" id="HGNC:7163"/>
<dbReference type="CTD" id="4326"/>
<dbReference type="DisGeNET" id="4326"/>
<dbReference type="GeneCards" id="MMP17"/>
<dbReference type="HGNC" id="HGNC:7163">
    <property type="gene designation" value="MMP17"/>
</dbReference>
<dbReference type="HPA" id="ENSG00000198598">
    <property type="expression patterns" value="Tissue enriched (brain)"/>
</dbReference>
<dbReference type="MIM" id="602285">
    <property type="type" value="gene"/>
</dbReference>
<dbReference type="neXtProt" id="NX_Q9ULZ9"/>
<dbReference type="OpenTargets" id="ENSG00000198598"/>
<dbReference type="PharmGKB" id="PA30875"/>
<dbReference type="VEuPathDB" id="HostDB:ENSG00000198598"/>
<dbReference type="eggNOG" id="KOG1565">
    <property type="taxonomic scope" value="Eukaryota"/>
</dbReference>
<dbReference type="GeneTree" id="ENSGT00940000158699"/>
<dbReference type="InParanoid" id="Q9ULZ9"/>
<dbReference type="OMA" id="WLVCGDP"/>
<dbReference type="OrthoDB" id="406838at2759"/>
<dbReference type="PAN-GO" id="Q9ULZ9">
    <property type="GO annotations" value="3 GO annotations based on evolutionary models"/>
</dbReference>
<dbReference type="PhylomeDB" id="Q9ULZ9"/>
<dbReference type="TreeFam" id="TF315428"/>
<dbReference type="PathwayCommons" id="Q9ULZ9"/>
<dbReference type="Reactome" id="R-HSA-1592389">
    <property type="pathway name" value="Activation of Matrix Metalloproteinases"/>
</dbReference>
<dbReference type="SignaLink" id="Q9ULZ9"/>
<dbReference type="SIGNOR" id="Q9ULZ9"/>
<dbReference type="BioGRID-ORCS" id="4326">
    <property type="hits" value="24 hits in 1161 CRISPR screens"/>
</dbReference>
<dbReference type="GeneWiki" id="MMP17"/>
<dbReference type="GenomeRNAi" id="4326"/>
<dbReference type="Pharos" id="Q9ULZ9">
    <property type="development level" value="Tchem"/>
</dbReference>
<dbReference type="PRO" id="PR:Q9ULZ9"/>
<dbReference type="Proteomes" id="UP000005640">
    <property type="component" value="Chromosome 12"/>
</dbReference>
<dbReference type="RNAct" id="Q9ULZ9">
    <property type="molecule type" value="protein"/>
</dbReference>
<dbReference type="Bgee" id="ENSG00000198598">
    <property type="expression patterns" value="Expressed in right frontal lobe and 102 other cell types or tissues"/>
</dbReference>
<dbReference type="ExpressionAtlas" id="Q9ULZ9">
    <property type="expression patterns" value="baseline and differential"/>
</dbReference>
<dbReference type="GO" id="GO:0031012">
    <property type="term" value="C:extracellular matrix"/>
    <property type="evidence" value="ECO:0007669"/>
    <property type="project" value="InterPro"/>
</dbReference>
<dbReference type="GO" id="GO:0005615">
    <property type="term" value="C:extracellular space"/>
    <property type="evidence" value="ECO:0000318"/>
    <property type="project" value="GO_Central"/>
</dbReference>
<dbReference type="GO" id="GO:0005886">
    <property type="term" value="C:plasma membrane"/>
    <property type="evidence" value="ECO:0007669"/>
    <property type="project" value="UniProtKB-SubCell"/>
</dbReference>
<dbReference type="GO" id="GO:0098552">
    <property type="term" value="C:side of membrane"/>
    <property type="evidence" value="ECO:0007669"/>
    <property type="project" value="UniProtKB-KW"/>
</dbReference>
<dbReference type="GO" id="GO:0008047">
    <property type="term" value="F:enzyme activator activity"/>
    <property type="evidence" value="ECO:0000304"/>
    <property type="project" value="ProtInc"/>
</dbReference>
<dbReference type="GO" id="GO:0070006">
    <property type="term" value="F:metalloaminopeptidase activity"/>
    <property type="evidence" value="ECO:0000304"/>
    <property type="project" value="ParkinsonsUK-UCL"/>
</dbReference>
<dbReference type="GO" id="GO:0004222">
    <property type="term" value="F:metalloendopeptidase activity"/>
    <property type="evidence" value="ECO:0000318"/>
    <property type="project" value="GO_Central"/>
</dbReference>
<dbReference type="GO" id="GO:0008270">
    <property type="term" value="F:zinc ion binding"/>
    <property type="evidence" value="ECO:0000304"/>
    <property type="project" value="ProtInc"/>
</dbReference>
<dbReference type="GO" id="GO:0030574">
    <property type="term" value="P:collagen catabolic process"/>
    <property type="evidence" value="ECO:0000318"/>
    <property type="project" value="GO_Central"/>
</dbReference>
<dbReference type="GO" id="GO:0042756">
    <property type="term" value="P:drinking behavior"/>
    <property type="evidence" value="ECO:0007669"/>
    <property type="project" value="Ensembl"/>
</dbReference>
<dbReference type="GO" id="GO:0030198">
    <property type="term" value="P:extracellular matrix organization"/>
    <property type="evidence" value="ECO:0000318"/>
    <property type="project" value="GO_Central"/>
</dbReference>
<dbReference type="GO" id="GO:0001822">
    <property type="term" value="P:kidney development"/>
    <property type="evidence" value="ECO:0007669"/>
    <property type="project" value="Ensembl"/>
</dbReference>
<dbReference type="GO" id="GO:0006508">
    <property type="term" value="P:proteolysis"/>
    <property type="evidence" value="ECO:0000304"/>
    <property type="project" value="ParkinsonsUK-UCL"/>
</dbReference>
<dbReference type="CDD" id="cd00094">
    <property type="entry name" value="HX"/>
    <property type="match status" value="1"/>
</dbReference>
<dbReference type="CDD" id="cd04278">
    <property type="entry name" value="ZnMc_MMP"/>
    <property type="match status" value="1"/>
</dbReference>
<dbReference type="FunFam" id="2.110.10.10:FF:000003">
    <property type="entry name" value="Matrix metallopeptidase 17"/>
    <property type="match status" value="1"/>
</dbReference>
<dbReference type="FunFam" id="3.40.390.10:FF:000016">
    <property type="entry name" value="Matrix metallopeptidase 17"/>
    <property type="match status" value="1"/>
</dbReference>
<dbReference type="Gene3D" id="3.40.390.10">
    <property type="entry name" value="Collagenase (Catalytic Domain)"/>
    <property type="match status" value="1"/>
</dbReference>
<dbReference type="Gene3D" id="2.110.10.10">
    <property type="entry name" value="Hemopexin-like domain"/>
    <property type="match status" value="1"/>
</dbReference>
<dbReference type="InterPro" id="IPR000585">
    <property type="entry name" value="Hemopexin-like_dom"/>
</dbReference>
<dbReference type="InterPro" id="IPR036375">
    <property type="entry name" value="Hemopexin-like_dom_sf"/>
</dbReference>
<dbReference type="InterPro" id="IPR018487">
    <property type="entry name" value="Hemopexin-like_repeat"/>
</dbReference>
<dbReference type="InterPro" id="IPR033739">
    <property type="entry name" value="M10A_MMP"/>
</dbReference>
<dbReference type="InterPro" id="IPR024079">
    <property type="entry name" value="MetalloPept_cat_dom_sf"/>
</dbReference>
<dbReference type="InterPro" id="IPR001818">
    <property type="entry name" value="Pept_M10_metallopeptidase"/>
</dbReference>
<dbReference type="InterPro" id="IPR021190">
    <property type="entry name" value="Pept_M10A"/>
</dbReference>
<dbReference type="InterPro" id="IPR006026">
    <property type="entry name" value="Peptidase_Metallo"/>
</dbReference>
<dbReference type="InterPro" id="IPR002477">
    <property type="entry name" value="Peptidoglycan-bd-like"/>
</dbReference>
<dbReference type="InterPro" id="IPR036365">
    <property type="entry name" value="PGBD-like_sf"/>
</dbReference>
<dbReference type="PANTHER" id="PTHR10201">
    <property type="entry name" value="MATRIX METALLOPROTEINASE"/>
    <property type="match status" value="1"/>
</dbReference>
<dbReference type="PANTHER" id="PTHR10201:SF21">
    <property type="entry name" value="MATRIX METALLOPROTEINASE-17"/>
    <property type="match status" value="1"/>
</dbReference>
<dbReference type="Pfam" id="PF00045">
    <property type="entry name" value="Hemopexin"/>
    <property type="match status" value="4"/>
</dbReference>
<dbReference type="Pfam" id="PF00413">
    <property type="entry name" value="Peptidase_M10"/>
    <property type="match status" value="1"/>
</dbReference>
<dbReference type="Pfam" id="PF01471">
    <property type="entry name" value="PG_binding_1"/>
    <property type="match status" value="1"/>
</dbReference>
<dbReference type="PIRSF" id="PIRSF001191">
    <property type="entry name" value="Peptidase_M10A_matrix"/>
    <property type="match status" value="1"/>
</dbReference>
<dbReference type="PRINTS" id="PR00138">
    <property type="entry name" value="MATRIXIN"/>
</dbReference>
<dbReference type="SMART" id="SM00120">
    <property type="entry name" value="HX"/>
    <property type="match status" value="4"/>
</dbReference>
<dbReference type="SMART" id="SM00235">
    <property type="entry name" value="ZnMc"/>
    <property type="match status" value="1"/>
</dbReference>
<dbReference type="SUPFAM" id="SSF50923">
    <property type="entry name" value="Hemopexin-like domain"/>
    <property type="match status" value="1"/>
</dbReference>
<dbReference type="SUPFAM" id="SSF55486">
    <property type="entry name" value="Metalloproteases ('zincins'), catalytic domain"/>
    <property type="match status" value="1"/>
</dbReference>
<dbReference type="SUPFAM" id="SSF47090">
    <property type="entry name" value="PGBD-like"/>
    <property type="match status" value="1"/>
</dbReference>
<dbReference type="PROSITE" id="PS51642">
    <property type="entry name" value="HEMOPEXIN_2"/>
    <property type="match status" value="4"/>
</dbReference>
<dbReference type="PROSITE" id="PS00142">
    <property type="entry name" value="ZINC_PROTEASE"/>
    <property type="match status" value="1"/>
</dbReference>
<keyword id="KW-0025">Alternative splicing</keyword>
<keyword id="KW-0106">Calcium</keyword>
<keyword id="KW-1003">Cell membrane</keyword>
<keyword id="KW-0165">Cleavage on pair of basic residues</keyword>
<keyword id="KW-1015">Disulfide bond</keyword>
<keyword id="KW-0272">Extracellular matrix</keyword>
<keyword id="KW-0325">Glycoprotein</keyword>
<keyword id="KW-0336">GPI-anchor</keyword>
<keyword id="KW-0378">Hydrolase</keyword>
<keyword id="KW-0449">Lipoprotein</keyword>
<keyword id="KW-0472">Membrane</keyword>
<keyword id="KW-0479">Metal-binding</keyword>
<keyword id="KW-0482">Metalloprotease</keyword>
<keyword id="KW-0645">Protease</keyword>
<keyword id="KW-1267">Proteomics identification</keyword>
<keyword id="KW-1185">Reference proteome</keyword>
<keyword id="KW-0677">Repeat</keyword>
<keyword id="KW-0964">Secreted</keyword>
<keyword id="KW-0732">Signal</keyword>
<keyword id="KW-0862">Zinc</keyword>
<keyword id="KW-0865">Zymogen</keyword>
<gene>
    <name type="primary">MMP17</name>
    <name type="synonym">MT4MMP</name>
</gene>
<evidence type="ECO:0000250" key="1"/>
<evidence type="ECO:0000255" key="2"/>
<evidence type="ECO:0000255" key="3">
    <source>
        <dbReference type="PROSITE-ProRule" id="PRU10095"/>
    </source>
</evidence>
<evidence type="ECO:0000256" key="4">
    <source>
        <dbReference type="SAM" id="MobiDB-lite"/>
    </source>
</evidence>
<evidence type="ECO:0000303" key="5">
    <source>
    </source>
</evidence>
<evidence type="ECO:0000305" key="6"/>